<reference key="1">
    <citation type="journal article" date="2010" name="J. Bacteriol.">
        <title>Complete genome sequence of Beijerinckia indica subsp. indica.</title>
        <authorList>
            <person name="Tamas I."/>
            <person name="Dedysh S.N."/>
            <person name="Liesack W."/>
            <person name="Stott M.B."/>
            <person name="Alam M."/>
            <person name="Murrell J.C."/>
            <person name="Dunfield P.F."/>
        </authorList>
    </citation>
    <scope>NUCLEOTIDE SEQUENCE [LARGE SCALE GENOMIC DNA]</scope>
    <source>
        <strain>ATCC 9039 / DSM 1715 / NCIMB 8712</strain>
    </source>
</reference>
<evidence type="ECO:0000255" key="1">
    <source>
        <dbReference type="HAMAP-Rule" id="MF_01337"/>
    </source>
</evidence>
<evidence type="ECO:0000305" key="2"/>
<keyword id="KW-1185">Reference proteome</keyword>
<keyword id="KW-0687">Ribonucleoprotein</keyword>
<keyword id="KW-0689">Ribosomal protein</keyword>
<keyword id="KW-0694">RNA-binding</keyword>
<keyword id="KW-0699">rRNA-binding</keyword>
<proteinExistence type="inferred from homology"/>
<protein>
    <recommendedName>
        <fullName evidence="1">Large ribosomal subunit protein uL18</fullName>
    </recommendedName>
    <alternativeName>
        <fullName evidence="2">50S ribosomal protein L18</fullName>
    </alternativeName>
</protein>
<accession>B2IK78</accession>
<feature type="chain" id="PRO_1000142621" description="Large ribosomal subunit protein uL18">
    <location>
        <begin position="1"/>
        <end position="120"/>
    </location>
</feature>
<gene>
    <name evidence="1" type="primary">rplR</name>
    <name type="ordered locus">Bind_1370</name>
</gene>
<dbReference type="EMBL" id="CP001016">
    <property type="protein sequence ID" value="ACB95010.1"/>
    <property type="molecule type" value="Genomic_DNA"/>
</dbReference>
<dbReference type="RefSeq" id="WP_012384367.1">
    <property type="nucleotide sequence ID" value="NC_010581.1"/>
</dbReference>
<dbReference type="SMR" id="B2IK78"/>
<dbReference type="STRING" id="395963.Bind_1370"/>
<dbReference type="KEGG" id="bid:Bind_1370"/>
<dbReference type="eggNOG" id="COG0256">
    <property type="taxonomic scope" value="Bacteria"/>
</dbReference>
<dbReference type="HOGENOM" id="CLU_098841_0_1_5"/>
<dbReference type="OrthoDB" id="9810939at2"/>
<dbReference type="Proteomes" id="UP000001695">
    <property type="component" value="Chromosome"/>
</dbReference>
<dbReference type="GO" id="GO:0022625">
    <property type="term" value="C:cytosolic large ribosomal subunit"/>
    <property type="evidence" value="ECO:0007669"/>
    <property type="project" value="TreeGrafter"/>
</dbReference>
<dbReference type="GO" id="GO:0008097">
    <property type="term" value="F:5S rRNA binding"/>
    <property type="evidence" value="ECO:0007669"/>
    <property type="project" value="TreeGrafter"/>
</dbReference>
<dbReference type="GO" id="GO:0003735">
    <property type="term" value="F:structural constituent of ribosome"/>
    <property type="evidence" value="ECO:0007669"/>
    <property type="project" value="InterPro"/>
</dbReference>
<dbReference type="GO" id="GO:0006412">
    <property type="term" value="P:translation"/>
    <property type="evidence" value="ECO:0007669"/>
    <property type="project" value="UniProtKB-UniRule"/>
</dbReference>
<dbReference type="CDD" id="cd00432">
    <property type="entry name" value="Ribosomal_L18_L5e"/>
    <property type="match status" value="1"/>
</dbReference>
<dbReference type="FunFam" id="3.30.420.100:FF:000001">
    <property type="entry name" value="50S ribosomal protein L18"/>
    <property type="match status" value="1"/>
</dbReference>
<dbReference type="Gene3D" id="3.30.420.100">
    <property type="match status" value="1"/>
</dbReference>
<dbReference type="HAMAP" id="MF_01337_B">
    <property type="entry name" value="Ribosomal_uL18_B"/>
    <property type="match status" value="1"/>
</dbReference>
<dbReference type="InterPro" id="IPR004389">
    <property type="entry name" value="Ribosomal_uL18_bac-type"/>
</dbReference>
<dbReference type="InterPro" id="IPR005484">
    <property type="entry name" value="Ribosomal_uL18_bac/euk"/>
</dbReference>
<dbReference type="NCBIfam" id="TIGR00060">
    <property type="entry name" value="L18_bact"/>
    <property type="match status" value="1"/>
</dbReference>
<dbReference type="PANTHER" id="PTHR12899">
    <property type="entry name" value="39S RIBOSOMAL PROTEIN L18, MITOCHONDRIAL"/>
    <property type="match status" value="1"/>
</dbReference>
<dbReference type="PANTHER" id="PTHR12899:SF3">
    <property type="entry name" value="LARGE RIBOSOMAL SUBUNIT PROTEIN UL18M"/>
    <property type="match status" value="1"/>
</dbReference>
<dbReference type="Pfam" id="PF00861">
    <property type="entry name" value="Ribosomal_L18p"/>
    <property type="match status" value="1"/>
</dbReference>
<dbReference type="SUPFAM" id="SSF53137">
    <property type="entry name" value="Translational machinery components"/>
    <property type="match status" value="1"/>
</dbReference>
<comment type="function">
    <text evidence="1">This is one of the proteins that bind and probably mediate the attachment of the 5S RNA into the large ribosomal subunit, where it forms part of the central protuberance.</text>
</comment>
<comment type="subunit">
    <text evidence="1">Part of the 50S ribosomal subunit; part of the 5S rRNA/L5/L18/L25 subcomplex. Contacts the 5S and 23S rRNAs.</text>
</comment>
<comment type="similarity">
    <text evidence="1">Belongs to the universal ribosomal protein uL18 family.</text>
</comment>
<organism>
    <name type="scientific">Beijerinckia indica subsp. indica (strain ATCC 9039 / DSM 1715 / NCIMB 8712)</name>
    <dbReference type="NCBI Taxonomy" id="395963"/>
    <lineage>
        <taxon>Bacteria</taxon>
        <taxon>Pseudomonadati</taxon>
        <taxon>Pseudomonadota</taxon>
        <taxon>Alphaproteobacteria</taxon>
        <taxon>Hyphomicrobiales</taxon>
        <taxon>Beijerinckiaceae</taxon>
        <taxon>Beijerinckia</taxon>
    </lineage>
</organism>
<sequence length="120" mass="13153">MAKDIEATERRKARVRRSLRARAYGKPRLSVFRSSKQIYCQIIDDGEGKTLVAASSLEKANREGLKTGATVEAAKIIGKLIAERAVQAGIKDVIFDRGAYMYHGRVKALADGAREGGLNF</sequence>
<name>RL18_BEII9</name>